<proteinExistence type="inferred from homology"/>
<name>PHS_NITHX</name>
<sequence length="101" mass="11219">MAERLSEDARKAAVKALSGWSEVAGREAIARVFTFRDFNEAFGFMARVALVAEKNDHHPEWRNVYKTVEVVLATHDAGGVTERDIRLAEAMNAIARQFGVA</sequence>
<comment type="catalytic activity">
    <reaction evidence="1">
        <text>(4aS,6R)-4a-hydroxy-L-erythro-5,6,7,8-tetrahydrobiopterin = (6R)-L-erythro-6,7-dihydrobiopterin + H2O</text>
        <dbReference type="Rhea" id="RHEA:11920"/>
        <dbReference type="ChEBI" id="CHEBI:15377"/>
        <dbReference type="ChEBI" id="CHEBI:15642"/>
        <dbReference type="ChEBI" id="CHEBI:43120"/>
        <dbReference type="EC" id="4.2.1.96"/>
    </reaction>
</comment>
<comment type="similarity">
    <text evidence="1">Belongs to the pterin-4-alpha-carbinolamine dehydratase family.</text>
</comment>
<keyword id="KW-0456">Lyase</keyword>
<keyword id="KW-1185">Reference proteome</keyword>
<reference key="1">
    <citation type="submission" date="2006-03" db="EMBL/GenBank/DDBJ databases">
        <title>Complete sequence of chromosome of Nitrobacter hamburgensis X14.</title>
        <authorList>
            <consortium name="US DOE Joint Genome Institute"/>
            <person name="Copeland A."/>
            <person name="Lucas S."/>
            <person name="Lapidus A."/>
            <person name="Barry K."/>
            <person name="Detter J.C."/>
            <person name="Glavina del Rio T."/>
            <person name="Hammon N."/>
            <person name="Israni S."/>
            <person name="Dalin E."/>
            <person name="Tice H."/>
            <person name="Pitluck S."/>
            <person name="Chain P."/>
            <person name="Malfatti S."/>
            <person name="Shin M."/>
            <person name="Vergez L."/>
            <person name="Schmutz J."/>
            <person name="Larimer F."/>
            <person name="Land M."/>
            <person name="Hauser L."/>
            <person name="Kyrpides N."/>
            <person name="Ivanova N."/>
            <person name="Ward B."/>
            <person name="Arp D."/>
            <person name="Klotz M."/>
            <person name="Stein L."/>
            <person name="O'Mullan G."/>
            <person name="Starkenburg S."/>
            <person name="Sayavedra L."/>
            <person name="Poret-Peterson A.T."/>
            <person name="Gentry M.E."/>
            <person name="Bruce D."/>
            <person name="Richardson P."/>
        </authorList>
    </citation>
    <scope>NUCLEOTIDE SEQUENCE [LARGE SCALE GENOMIC DNA]</scope>
    <source>
        <strain>DSM 10229 / NCIMB 13809 / X14</strain>
    </source>
</reference>
<organism>
    <name type="scientific">Nitrobacter hamburgensis (strain DSM 10229 / NCIMB 13809 / X14)</name>
    <dbReference type="NCBI Taxonomy" id="323097"/>
    <lineage>
        <taxon>Bacteria</taxon>
        <taxon>Pseudomonadati</taxon>
        <taxon>Pseudomonadota</taxon>
        <taxon>Alphaproteobacteria</taxon>
        <taxon>Hyphomicrobiales</taxon>
        <taxon>Nitrobacteraceae</taxon>
        <taxon>Nitrobacter</taxon>
    </lineage>
</organism>
<evidence type="ECO:0000255" key="1">
    <source>
        <dbReference type="HAMAP-Rule" id="MF_00434"/>
    </source>
</evidence>
<feature type="chain" id="PRO_1000050429" description="Putative pterin-4-alpha-carbinolamine dehydratase">
    <location>
        <begin position="1"/>
        <end position="101"/>
    </location>
</feature>
<accession>Q1QHE0</accession>
<gene>
    <name type="ordered locus">Nham_3629</name>
</gene>
<protein>
    <recommendedName>
        <fullName evidence="1">Putative pterin-4-alpha-carbinolamine dehydratase</fullName>
        <shortName evidence="1">PHS</shortName>
        <ecNumber evidence="1">4.2.1.96</ecNumber>
    </recommendedName>
    <alternativeName>
        <fullName evidence="1">4-alpha-hydroxy-tetrahydropterin dehydratase</fullName>
    </alternativeName>
    <alternativeName>
        <fullName evidence="1">Pterin carbinolamine dehydratase</fullName>
        <shortName evidence="1">PCD</shortName>
    </alternativeName>
</protein>
<dbReference type="EC" id="4.2.1.96" evidence="1"/>
<dbReference type="EMBL" id="CP000319">
    <property type="protein sequence ID" value="ABE64357.1"/>
    <property type="molecule type" value="Genomic_DNA"/>
</dbReference>
<dbReference type="SMR" id="Q1QHE0"/>
<dbReference type="STRING" id="323097.Nham_3629"/>
<dbReference type="KEGG" id="nha:Nham_3629"/>
<dbReference type="eggNOG" id="COG2154">
    <property type="taxonomic scope" value="Bacteria"/>
</dbReference>
<dbReference type="HOGENOM" id="CLU_081974_3_2_5"/>
<dbReference type="OrthoDB" id="9794987at2"/>
<dbReference type="Proteomes" id="UP000001953">
    <property type="component" value="Chromosome"/>
</dbReference>
<dbReference type="GO" id="GO:0008124">
    <property type="term" value="F:4-alpha-hydroxytetrahydrobiopterin dehydratase activity"/>
    <property type="evidence" value="ECO:0007669"/>
    <property type="project" value="UniProtKB-UniRule"/>
</dbReference>
<dbReference type="GO" id="GO:0006729">
    <property type="term" value="P:tetrahydrobiopterin biosynthetic process"/>
    <property type="evidence" value="ECO:0007669"/>
    <property type="project" value="InterPro"/>
</dbReference>
<dbReference type="CDD" id="cd00914">
    <property type="entry name" value="PCD_DCoH_subfamily_b"/>
    <property type="match status" value="1"/>
</dbReference>
<dbReference type="Gene3D" id="3.30.1360.20">
    <property type="entry name" value="Transcriptional coactivator/pterin dehydratase"/>
    <property type="match status" value="1"/>
</dbReference>
<dbReference type="HAMAP" id="MF_00434">
    <property type="entry name" value="Pterin_4_alpha"/>
    <property type="match status" value="1"/>
</dbReference>
<dbReference type="InterPro" id="IPR036428">
    <property type="entry name" value="PCD_sf"/>
</dbReference>
<dbReference type="InterPro" id="IPR001533">
    <property type="entry name" value="Pterin_deHydtase"/>
</dbReference>
<dbReference type="NCBIfam" id="NF002017">
    <property type="entry name" value="PRK00823.1-2"/>
    <property type="match status" value="1"/>
</dbReference>
<dbReference type="NCBIfam" id="NF002018">
    <property type="entry name" value="PRK00823.1-3"/>
    <property type="match status" value="1"/>
</dbReference>
<dbReference type="PANTHER" id="PTHR12599">
    <property type="entry name" value="PTERIN-4-ALPHA-CARBINOLAMINE DEHYDRATASE"/>
    <property type="match status" value="1"/>
</dbReference>
<dbReference type="PANTHER" id="PTHR12599:SF0">
    <property type="entry name" value="PTERIN-4-ALPHA-CARBINOLAMINE DEHYDRATASE"/>
    <property type="match status" value="1"/>
</dbReference>
<dbReference type="Pfam" id="PF01329">
    <property type="entry name" value="Pterin_4a"/>
    <property type="match status" value="1"/>
</dbReference>
<dbReference type="SUPFAM" id="SSF55248">
    <property type="entry name" value="PCD-like"/>
    <property type="match status" value="1"/>
</dbReference>